<dbReference type="EC" id="6.1.1.4" evidence="1"/>
<dbReference type="EMBL" id="CR543861">
    <property type="protein sequence ID" value="CAG69798.1"/>
    <property type="molecule type" value="Genomic_DNA"/>
</dbReference>
<dbReference type="RefSeq" id="WP_004924404.1">
    <property type="nucleotide sequence ID" value="NC_005966.1"/>
</dbReference>
<dbReference type="SMR" id="Q6F817"/>
<dbReference type="STRING" id="202950.GCA_001485005_02758"/>
<dbReference type="GeneID" id="45235320"/>
<dbReference type="KEGG" id="aci:ACIAD3106"/>
<dbReference type="eggNOG" id="COG0495">
    <property type="taxonomic scope" value="Bacteria"/>
</dbReference>
<dbReference type="HOGENOM" id="CLU_004427_0_0_6"/>
<dbReference type="OrthoDB" id="9810365at2"/>
<dbReference type="BioCyc" id="ASP62977:ACIAD_RS14025-MONOMER"/>
<dbReference type="Proteomes" id="UP000000430">
    <property type="component" value="Chromosome"/>
</dbReference>
<dbReference type="GO" id="GO:0005829">
    <property type="term" value="C:cytosol"/>
    <property type="evidence" value="ECO:0007669"/>
    <property type="project" value="TreeGrafter"/>
</dbReference>
<dbReference type="GO" id="GO:0002161">
    <property type="term" value="F:aminoacyl-tRNA deacylase activity"/>
    <property type="evidence" value="ECO:0007669"/>
    <property type="project" value="InterPro"/>
</dbReference>
<dbReference type="GO" id="GO:0005524">
    <property type="term" value="F:ATP binding"/>
    <property type="evidence" value="ECO:0007669"/>
    <property type="project" value="UniProtKB-UniRule"/>
</dbReference>
<dbReference type="GO" id="GO:0004823">
    <property type="term" value="F:leucine-tRNA ligase activity"/>
    <property type="evidence" value="ECO:0007669"/>
    <property type="project" value="UniProtKB-UniRule"/>
</dbReference>
<dbReference type="GO" id="GO:0006429">
    <property type="term" value="P:leucyl-tRNA aminoacylation"/>
    <property type="evidence" value="ECO:0007669"/>
    <property type="project" value="UniProtKB-UniRule"/>
</dbReference>
<dbReference type="CDD" id="cd07958">
    <property type="entry name" value="Anticodon_Ia_Leu_BEm"/>
    <property type="match status" value="1"/>
</dbReference>
<dbReference type="FunFam" id="1.10.730.10:FF:000003">
    <property type="entry name" value="Leucine--tRNA ligase"/>
    <property type="match status" value="1"/>
</dbReference>
<dbReference type="FunFam" id="2.20.28.290:FF:000001">
    <property type="entry name" value="Leucine--tRNA ligase"/>
    <property type="match status" value="1"/>
</dbReference>
<dbReference type="FunFam" id="3.40.50.620:FF:000003">
    <property type="entry name" value="Leucine--tRNA ligase"/>
    <property type="match status" value="1"/>
</dbReference>
<dbReference type="FunFam" id="3.40.50.620:FF:000124">
    <property type="entry name" value="Leucine--tRNA ligase"/>
    <property type="match status" value="1"/>
</dbReference>
<dbReference type="FunFam" id="3.90.740.10:FF:000012">
    <property type="entry name" value="Leucine--tRNA ligase"/>
    <property type="match status" value="1"/>
</dbReference>
<dbReference type="Gene3D" id="2.20.28.290">
    <property type="match status" value="1"/>
</dbReference>
<dbReference type="Gene3D" id="3.10.20.590">
    <property type="match status" value="1"/>
</dbReference>
<dbReference type="Gene3D" id="3.40.50.620">
    <property type="entry name" value="HUPs"/>
    <property type="match status" value="2"/>
</dbReference>
<dbReference type="Gene3D" id="1.10.730.10">
    <property type="entry name" value="Isoleucyl-tRNA Synthetase, Domain 1"/>
    <property type="match status" value="1"/>
</dbReference>
<dbReference type="Gene3D" id="3.90.740.10">
    <property type="entry name" value="Valyl/Leucyl/Isoleucyl-tRNA synthetase, editing domain"/>
    <property type="match status" value="1"/>
</dbReference>
<dbReference type="HAMAP" id="MF_00049_B">
    <property type="entry name" value="Leu_tRNA_synth_B"/>
    <property type="match status" value="1"/>
</dbReference>
<dbReference type="InterPro" id="IPR001412">
    <property type="entry name" value="aa-tRNA-synth_I_CS"/>
</dbReference>
<dbReference type="InterPro" id="IPR002300">
    <property type="entry name" value="aa-tRNA-synth_Ia"/>
</dbReference>
<dbReference type="InterPro" id="IPR002302">
    <property type="entry name" value="Leu-tRNA-ligase"/>
</dbReference>
<dbReference type="InterPro" id="IPR025709">
    <property type="entry name" value="Leu_tRNA-synth_edit"/>
</dbReference>
<dbReference type="InterPro" id="IPR013155">
    <property type="entry name" value="M/V/L/I-tRNA-synth_anticd-bd"/>
</dbReference>
<dbReference type="InterPro" id="IPR015413">
    <property type="entry name" value="Methionyl/Leucyl_tRNA_Synth"/>
</dbReference>
<dbReference type="InterPro" id="IPR014729">
    <property type="entry name" value="Rossmann-like_a/b/a_fold"/>
</dbReference>
<dbReference type="InterPro" id="IPR009080">
    <property type="entry name" value="tRNAsynth_Ia_anticodon-bd"/>
</dbReference>
<dbReference type="InterPro" id="IPR009008">
    <property type="entry name" value="Val/Leu/Ile-tRNA-synth_edit"/>
</dbReference>
<dbReference type="NCBIfam" id="TIGR00396">
    <property type="entry name" value="leuS_bact"/>
    <property type="match status" value="1"/>
</dbReference>
<dbReference type="PANTHER" id="PTHR43740:SF2">
    <property type="entry name" value="LEUCINE--TRNA LIGASE, MITOCHONDRIAL"/>
    <property type="match status" value="1"/>
</dbReference>
<dbReference type="PANTHER" id="PTHR43740">
    <property type="entry name" value="LEUCYL-TRNA SYNTHETASE"/>
    <property type="match status" value="1"/>
</dbReference>
<dbReference type="Pfam" id="PF08264">
    <property type="entry name" value="Anticodon_1"/>
    <property type="match status" value="1"/>
</dbReference>
<dbReference type="Pfam" id="PF00133">
    <property type="entry name" value="tRNA-synt_1"/>
    <property type="match status" value="1"/>
</dbReference>
<dbReference type="Pfam" id="PF13603">
    <property type="entry name" value="tRNA-synt_1_2"/>
    <property type="match status" value="1"/>
</dbReference>
<dbReference type="Pfam" id="PF09334">
    <property type="entry name" value="tRNA-synt_1g"/>
    <property type="match status" value="1"/>
</dbReference>
<dbReference type="PRINTS" id="PR00985">
    <property type="entry name" value="TRNASYNTHLEU"/>
</dbReference>
<dbReference type="SUPFAM" id="SSF47323">
    <property type="entry name" value="Anticodon-binding domain of a subclass of class I aminoacyl-tRNA synthetases"/>
    <property type="match status" value="1"/>
</dbReference>
<dbReference type="SUPFAM" id="SSF52374">
    <property type="entry name" value="Nucleotidylyl transferase"/>
    <property type="match status" value="1"/>
</dbReference>
<dbReference type="SUPFAM" id="SSF50677">
    <property type="entry name" value="ValRS/IleRS/LeuRS editing domain"/>
    <property type="match status" value="1"/>
</dbReference>
<dbReference type="PROSITE" id="PS00178">
    <property type="entry name" value="AA_TRNA_LIGASE_I"/>
    <property type="match status" value="1"/>
</dbReference>
<evidence type="ECO:0000255" key="1">
    <source>
        <dbReference type="HAMAP-Rule" id="MF_00049"/>
    </source>
</evidence>
<protein>
    <recommendedName>
        <fullName evidence="1">Leucine--tRNA ligase</fullName>
        <ecNumber evidence="1">6.1.1.4</ecNumber>
    </recommendedName>
    <alternativeName>
        <fullName evidence="1">Leucyl-tRNA synthetase</fullName>
        <shortName evidence="1">LeuRS</shortName>
    </alternativeName>
</protein>
<reference key="1">
    <citation type="journal article" date="2004" name="Nucleic Acids Res.">
        <title>Unique features revealed by the genome sequence of Acinetobacter sp. ADP1, a versatile and naturally transformation competent bacterium.</title>
        <authorList>
            <person name="Barbe V."/>
            <person name="Vallenet D."/>
            <person name="Fonknechten N."/>
            <person name="Kreimeyer A."/>
            <person name="Oztas S."/>
            <person name="Labarre L."/>
            <person name="Cruveiller S."/>
            <person name="Robert C."/>
            <person name="Duprat S."/>
            <person name="Wincker P."/>
            <person name="Ornston L.N."/>
            <person name="Weissenbach J."/>
            <person name="Marliere P."/>
            <person name="Cohen G.N."/>
            <person name="Medigue C."/>
        </authorList>
    </citation>
    <scope>NUCLEOTIDE SEQUENCE [LARGE SCALE GENOMIC DNA]</scope>
    <source>
        <strain>ATCC 33305 / BD413 / ADP1</strain>
    </source>
</reference>
<name>SYL_ACIAD</name>
<organism>
    <name type="scientific">Acinetobacter baylyi (strain ATCC 33305 / BD413 / ADP1)</name>
    <dbReference type="NCBI Taxonomy" id="62977"/>
    <lineage>
        <taxon>Bacteria</taxon>
        <taxon>Pseudomonadati</taxon>
        <taxon>Pseudomonadota</taxon>
        <taxon>Gammaproteobacteria</taxon>
        <taxon>Moraxellales</taxon>
        <taxon>Moraxellaceae</taxon>
        <taxon>Acinetobacter</taxon>
    </lineage>
</organism>
<gene>
    <name evidence="1" type="primary">leuS</name>
    <name type="ordered locus">ACIAD3106</name>
</gene>
<keyword id="KW-0030">Aminoacyl-tRNA synthetase</keyword>
<keyword id="KW-0067">ATP-binding</keyword>
<keyword id="KW-0963">Cytoplasm</keyword>
<keyword id="KW-0436">Ligase</keyword>
<keyword id="KW-0547">Nucleotide-binding</keyword>
<keyword id="KW-0648">Protein biosynthesis</keyword>
<proteinExistence type="inferred from homology"/>
<accession>Q6F817</accession>
<comment type="catalytic activity">
    <reaction evidence="1">
        <text>tRNA(Leu) + L-leucine + ATP = L-leucyl-tRNA(Leu) + AMP + diphosphate</text>
        <dbReference type="Rhea" id="RHEA:11688"/>
        <dbReference type="Rhea" id="RHEA-COMP:9613"/>
        <dbReference type="Rhea" id="RHEA-COMP:9622"/>
        <dbReference type="ChEBI" id="CHEBI:30616"/>
        <dbReference type="ChEBI" id="CHEBI:33019"/>
        <dbReference type="ChEBI" id="CHEBI:57427"/>
        <dbReference type="ChEBI" id="CHEBI:78442"/>
        <dbReference type="ChEBI" id="CHEBI:78494"/>
        <dbReference type="ChEBI" id="CHEBI:456215"/>
        <dbReference type="EC" id="6.1.1.4"/>
    </reaction>
</comment>
<comment type="subcellular location">
    <subcellularLocation>
        <location evidence="1">Cytoplasm</location>
    </subcellularLocation>
</comment>
<comment type="similarity">
    <text evidence="1">Belongs to the class-I aminoacyl-tRNA synthetase family.</text>
</comment>
<feature type="chain" id="PRO_0000151959" description="Leucine--tRNA ligase">
    <location>
        <begin position="1"/>
        <end position="873"/>
    </location>
</feature>
<feature type="short sequence motif" description="'HIGH' region">
    <location>
        <begin position="47"/>
        <end position="57"/>
    </location>
</feature>
<feature type="short sequence motif" description="'KMSKS' region">
    <location>
        <begin position="636"/>
        <end position="640"/>
    </location>
</feature>
<feature type="binding site" evidence="1">
    <location>
        <position position="639"/>
    </location>
    <ligand>
        <name>ATP</name>
        <dbReference type="ChEBI" id="CHEBI:30616"/>
    </ligand>
</feature>
<sequence length="873" mass="97658">MTTAHIDAEYQANAIESQIQNDWENRKAFKVADTVEGKHRYILSMFPYPSGKLHMGHVRNYTIGDVISRFYRLKGETVLQPMGWDAFGLPAENAAIAHQVAPAKWTFENIAYMRDQLKKLGLSIDWDREFATCTPEYYHWEQWLFVQLYKKGLIYRKLSTVNWDPVDQTVLANEQVENGRGWRSGALVEKRDIPMYYFRITDYAQELLDDLDTLKDGWPQQVLTMQRNWIGRSTGMDITFPSANPEIYADGLTVYTTRADTLMGVTYVAVAAEHPMALKAAENNPELAAFIEECRMGSVAEADLATAEKKGMATGLFVKHPVTGEEVPVWIANYVLMSYGSGAVMAVPAHDERDFEFANKFNLPIKQVIDAKAADDAEYSVTAWQEWYGSKEGTLVNSGEFDGLEFQAAFDAFLAKLEPQGLANSKVQFRLRDWGVSRQRYWGCPIPMINCDSCGQVPVPEEQLPVVLPTDVVPDGSGNPLNKMPEFYETTCPSCGGHARRETDTLDTFVESSWYYARYASPDFTGGMVKPEAAQSWLPVNQYIGGVEHAILHLLYARFFHKLMRDEGVVQGNEPFTNLLTQGMVLADTFYRESESGKKTWFNPADIILERDEKGRIVSAKYSGDGQDVVIGGQEKMSKSKNNGIDPQAIIDQYGADTARVFMMFAAPPDQSLEWSDAGVEGANRFLKRVWRLATGFLEKGYAQAPIAAELSKDAQDLRRKTHETIQKVGDDIERRHAFNTAIAALMELLNATSKFEVQTADDAAVAREAIETLLTLLAPFAPHLSQTLLAEFGIDLIAAQFPSVDESALTRNTQTIVVQVNGKLRGKLEVSVEISKDELLAQAKALPEIQQFLTGPTKKEIVVPNKLVNLVV</sequence>